<dbReference type="EC" id="1.14.14.1"/>
<dbReference type="EMBL" id="M23998">
    <property type="protein sequence ID" value="AAA40427.1"/>
    <property type="molecule type" value="mRNA"/>
</dbReference>
<dbReference type="EMBL" id="M23997">
    <property type="protein sequence ID" value="AAA40428.1"/>
    <property type="status" value="ALT_SEQ"/>
    <property type="molecule type" value="mRNA"/>
</dbReference>
<dbReference type="EMBL" id="M27168">
    <property type="protein sequence ID" value="AAA39876.1"/>
    <property type="molecule type" value="mRNA"/>
</dbReference>
<dbReference type="EMBL" id="M24267">
    <property type="protein sequence ID" value="AAA75462.1"/>
    <property type="molecule type" value="Genomic_DNA"/>
</dbReference>
<dbReference type="EMBL" id="M24262">
    <property type="protein sequence ID" value="AAA75462.1"/>
    <property type="status" value="JOINED"/>
    <property type="molecule type" value="Genomic_DNA"/>
</dbReference>
<dbReference type="EMBL" id="CH466550">
    <property type="protein sequence ID" value="EDL04501.1"/>
    <property type="molecule type" value="Genomic_DNA"/>
</dbReference>
<dbReference type="EMBL" id="BC010593">
    <property type="protein sequence ID" value="AAH10593.1"/>
    <property type="molecule type" value="mRNA"/>
</dbReference>
<dbReference type="EMBL" id="BC094015">
    <property type="protein sequence ID" value="AAH94015.1"/>
    <property type="molecule type" value="mRNA"/>
</dbReference>
<dbReference type="CCDS" id="CCDS27691.1"/>
<dbReference type="PIR" id="B27384">
    <property type="entry name" value="B27384"/>
</dbReference>
<dbReference type="PIR" id="S15806">
    <property type="entry name" value="A27384"/>
</dbReference>
<dbReference type="RefSeq" id="NP_034136.2">
    <property type="nucleotide sequence ID" value="NM_010006.2"/>
</dbReference>
<dbReference type="SMR" id="P11714"/>
<dbReference type="FunCoup" id="P11714">
    <property type="interactions" value="1277"/>
</dbReference>
<dbReference type="STRING" id="10090.ENSMUSP00000086530"/>
<dbReference type="GlyGen" id="P11714">
    <property type="glycosylation" value="1 site, 1 O-linked glycan (1 site)"/>
</dbReference>
<dbReference type="iPTMnet" id="P11714"/>
<dbReference type="PhosphoSitePlus" id="P11714"/>
<dbReference type="SwissPalm" id="P11714"/>
<dbReference type="jPOST" id="P11714"/>
<dbReference type="PaxDb" id="10090-ENSMUSP00000086530"/>
<dbReference type="PeptideAtlas" id="P11714"/>
<dbReference type="ProteomicsDB" id="285279"/>
<dbReference type="DNASU" id="13105"/>
<dbReference type="Ensembl" id="ENSMUST00000089129.7">
    <property type="protein sequence ID" value="ENSMUSP00000086530.6"/>
    <property type="gene ID" value="ENSMUSG00000068086.7"/>
</dbReference>
<dbReference type="GeneID" id="13105"/>
<dbReference type="KEGG" id="mmu:13105"/>
<dbReference type="UCSC" id="uc007wzg.2">
    <property type="organism name" value="mouse"/>
</dbReference>
<dbReference type="AGR" id="MGI:88606"/>
<dbReference type="CTD" id="13105"/>
<dbReference type="MGI" id="MGI:88606">
    <property type="gene designation" value="Cyp2d9"/>
</dbReference>
<dbReference type="VEuPathDB" id="HostDB:ENSMUSG00000068086"/>
<dbReference type="eggNOG" id="KOG0156">
    <property type="taxonomic scope" value="Eukaryota"/>
</dbReference>
<dbReference type="GeneTree" id="ENSGT00940000153331"/>
<dbReference type="HOGENOM" id="CLU_001570_22_0_1"/>
<dbReference type="InParanoid" id="P11714"/>
<dbReference type="OMA" id="NEIDQMQ"/>
<dbReference type="OrthoDB" id="3934656at2759"/>
<dbReference type="PhylomeDB" id="P11714"/>
<dbReference type="TreeFam" id="TF352043"/>
<dbReference type="BioGRID-ORCS" id="13105">
    <property type="hits" value="3 hits in 77 CRISPR screens"/>
</dbReference>
<dbReference type="ChiTaRS" id="Cyp2d9">
    <property type="organism name" value="mouse"/>
</dbReference>
<dbReference type="PRO" id="PR:P11714"/>
<dbReference type="Proteomes" id="UP000000589">
    <property type="component" value="Chromosome 15"/>
</dbReference>
<dbReference type="RNAct" id="P11714">
    <property type="molecule type" value="protein"/>
</dbReference>
<dbReference type="Bgee" id="ENSMUSG00000068086">
    <property type="expression patterns" value="Expressed in left lobe of liver and 36 other cell types or tissues"/>
</dbReference>
<dbReference type="ExpressionAtlas" id="P11714">
    <property type="expression patterns" value="baseline and differential"/>
</dbReference>
<dbReference type="GO" id="GO:0005789">
    <property type="term" value="C:endoplasmic reticulum membrane"/>
    <property type="evidence" value="ECO:0007669"/>
    <property type="project" value="UniProtKB-SubCell"/>
</dbReference>
<dbReference type="GO" id="GO:0020037">
    <property type="term" value="F:heme binding"/>
    <property type="evidence" value="ECO:0007669"/>
    <property type="project" value="InterPro"/>
</dbReference>
<dbReference type="GO" id="GO:0005506">
    <property type="term" value="F:iron ion binding"/>
    <property type="evidence" value="ECO:0007669"/>
    <property type="project" value="InterPro"/>
</dbReference>
<dbReference type="GO" id="GO:0016712">
    <property type="term" value="F:oxidoreductase activity, acting on paired donors, with incorporation or reduction of molecular oxygen, reduced flavin or flavoprotein as one donor, and incorporation of one atom of oxygen"/>
    <property type="evidence" value="ECO:0007669"/>
    <property type="project" value="UniProtKB-EC"/>
</dbReference>
<dbReference type="CDD" id="cd20663">
    <property type="entry name" value="CYP2D"/>
    <property type="match status" value="1"/>
</dbReference>
<dbReference type="FunFam" id="1.10.630.10:FF:000004">
    <property type="entry name" value="cytochrome P450 2D15 isoform X1"/>
    <property type="match status" value="1"/>
</dbReference>
<dbReference type="Gene3D" id="1.10.630.10">
    <property type="entry name" value="Cytochrome P450"/>
    <property type="match status" value="1"/>
</dbReference>
<dbReference type="InterPro" id="IPR001128">
    <property type="entry name" value="Cyt_P450"/>
</dbReference>
<dbReference type="InterPro" id="IPR017972">
    <property type="entry name" value="Cyt_P450_CS"/>
</dbReference>
<dbReference type="InterPro" id="IPR002401">
    <property type="entry name" value="Cyt_P450_E_grp-I"/>
</dbReference>
<dbReference type="InterPro" id="IPR008069">
    <property type="entry name" value="Cyt_P450_E_grp-I_CYP2D-like"/>
</dbReference>
<dbReference type="InterPro" id="IPR036396">
    <property type="entry name" value="Cyt_P450_sf"/>
</dbReference>
<dbReference type="InterPro" id="IPR050182">
    <property type="entry name" value="Cytochrome_P450_fam2"/>
</dbReference>
<dbReference type="PANTHER" id="PTHR24300">
    <property type="entry name" value="CYTOCHROME P450 508A4-RELATED"/>
    <property type="match status" value="1"/>
</dbReference>
<dbReference type="PANTHER" id="PTHR24300:SF119">
    <property type="entry name" value="CYTOCHROME P450-RELATED"/>
    <property type="match status" value="1"/>
</dbReference>
<dbReference type="Pfam" id="PF00067">
    <property type="entry name" value="p450"/>
    <property type="match status" value="1"/>
</dbReference>
<dbReference type="PRINTS" id="PR00463">
    <property type="entry name" value="EP450I"/>
</dbReference>
<dbReference type="PRINTS" id="PR01686">
    <property type="entry name" value="EP450ICYP2D"/>
</dbReference>
<dbReference type="PRINTS" id="PR00385">
    <property type="entry name" value="P450"/>
</dbReference>
<dbReference type="SUPFAM" id="SSF48264">
    <property type="entry name" value="Cytochrome P450"/>
    <property type="match status" value="1"/>
</dbReference>
<dbReference type="PROSITE" id="PS00086">
    <property type="entry name" value="CYTOCHROME_P450"/>
    <property type="match status" value="1"/>
</dbReference>
<feature type="chain" id="PRO_0000051734" description="Cytochrome P450 2D9">
    <location>
        <begin position="1"/>
        <end position="504"/>
    </location>
</feature>
<feature type="binding site" description="axial binding residue">
    <location>
        <position position="446"/>
    </location>
    <ligand>
        <name>heme</name>
        <dbReference type="ChEBI" id="CHEBI:30413"/>
    </ligand>
    <ligandPart>
        <name>Fe</name>
        <dbReference type="ChEBI" id="CHEBI:18248"/>
    </ligandPart>
</feature>
<feature type="modified residue" description="Phosphoserine" evidence="2">
    <location>
        <position position="249"/>
    </location>
</feature>
<feature type="sequence conflict" description="In Ref. 2; AAA39876." evidence="3" ref="2">
    <original>LG</original>
    <variation>QD</variation>
    <location>
        <begin position="54"/>
        <end position="55"/>
    </location>
</feature>
<feature type="sequence conflict" description="In Ref. 1; AAA40428/AAA40427, 2; AAA39876 and 3; AAA75462." evidence="3" ref="1 2 3">
    <original>E</original>
    <variation>Q</variation>
    <location>
        <position position="281"/>
    </location>
</feature>
<gene>
    <name type="primary">Cyp2d9</name>
    <name type="synonym">Cyp2d-9</name>
</gene>
<evidence type="ECO:0000250" key="1"/>
<evidence type="ECO:0000250" key="2">
    <source>
        <dbReference type="UniProtKB" id="P10634"/>
    </source>
</evidence>
<evidence type="ECO:0000305" key="3"/>
<proteinExistence type="evidence at protein level"/>
<comment type="function">
    <text>Cytochromes P450 are a group of heme-thiolate monooxygenases. In liver microsomes, this enzyme is involved in an NADPH-dependent electron transport pathway. It oxidizes a variety of structurally unrelated compounds, including steroids, fatty acids, and xenobiotics.</text>
</comment>
<comment type="catalytic activity">
    <reaction>
        <text>an organic molecule + reduced [NADPH--hemoprotein reductase] + O2 = an alcohol + oxidized [NADPH--hemoprotein reductase] + H2O + H(+)</text>
        <dbReference type="Rhea" id="RHEA:17149"/>
        <dbReference type="Rhea" id="RHEA-COMP:11964"/>
        <dbReference type="Rhea" id="RHEA-COMP:11965"/>
        <dbReference type="ChEBI" id="CHEBI:15377"/>
        <dbReference type="ChEBI" id="CHEBI:15378"/>
        <dbReference type="ChEBI" id="CHEBI:15379"/>
        <dbReference type="ChEBI" id="CHEBI:30879"/>
        <dbReference type="ChEBI" id="CHEBI:57618"/>
        <dbReference type="ChEBI" id="CHEBI:58210"/>
        <dbReference type="ChEBI" id="CHEBI:142491"/>
        <dbReference type="EC" id="1.14.14.1"/>
    </reaction>
</comment>
<comment type="cofactor">
    <cofactor evidence="1">
        <name>heme</name>
        <dbReference type="ChEBI" id="CHEBI:30413"/>
    </cofactor>
</comment>
<comment type="subcellular location">
    <subcellularLocation>
        <location>Endoplasmic reticulum membrane</location>
        <topology>Peripheral membrane protein</topology>
    </subcellularLocation>
    <subcellularLocation>
        <location>Microsome membrane</location>
        <topology>Peripheral membrane protein</topology>
    </subcellularLocation>
</comment>
<comment type="induction">
    <text>P450 can be induced to high levels in liver and other tissues by various foreign compounds, including drugs, pesticides, and carcinogens.</text>
</comment>
<comment type="similarity">
    <text evidence="3">Belongs to the cytochrome P450 family.</text>
</comment>
<accession>P11714</accession>
<accession>Q64489</accession>
<accession>Q921V1</accession>
<name>CP2D9_MOUSE</name>
<organism>
    <name type="scientific">Mus musculus</name>
    <name type="common">Mouse</name>
    <dbReference type="NCBI Taxonomy" id="10090"/>
    <lineage>
        <taxon>Eukaryota</taxon>
        <taxon>Metazoa</taxon>
        <taxon>Chordata</taxon>
        <taxon>Craniata</taxon>
        <taxon>Vertebrata</taxon>
        <taxon>Euteleostomi</taxon>
        <taxon>Mammalia</taxon>
        <taxon>Eutheria</taxon>
        <taxon>Euarchontoglires</taxon>
        <taxon>Glires</taxon>
        <taxon>Rodentia</taxon>
        <taxon>Myomorpha</taxon>
        <taxon>Muroidea</taxon>
        <taxon>Muridae</taxon>
        <taxon>Murinae</taxon>
        <taxon>Mus</taxon>
        <taxon>Mus</taxon>
    </lineage>
</organism>
<sequence length="504" mass="56950">MELLTGTDLWPVAIFTVIFILLVDLTHQRQRWTSRYPPGPVPWPVLGNLLQVDLGNMPYSLYKLQNRYGDVFSLQMAWKPMVVINGLKAMKEMLLTCGEDTADRPPVPIFEYLGVKPGSQGVVLAPYGPEWREQRRFSVSTLRNFGLGKKSLEDWVTKEANHLCDAFTAQAGQPINPNPMLNKSTCNVIASLIFARRFEYEDPFLIRMLKVLEQSLTEVSGLIPEVLNAFPILLRIPRLADKALQGQKSFIAILDNLLTENRTTWDPVQAPRNLTDAFLAEIEKAKGNPESSFNDENLLMVVRDLFGAGMLTTSTTLSWALMLMILHPDVQRRVQQEIDEVIGQVRHPEMADQAHMPYTNAVIHEVQRFGDIVPVNLPRITSHDIEVQDFLIPKGTILLPNMSSMLKDESVWEKPLRFHPEHFLDAQGHFVKPEAFMPFSAGRRSCLGEALARMELFLFFTCLLQRFSFSVPDGQPQPSNSGVYGILVAPSPYQLCAVVRDQGH</sequence>
<keyword id="KW-0256">Endoplasmic reticulum</keyword>
<keyword id="KW-0349">Heme</keyword>
<keyword id="KW-0408">Iron</keyword>
<keyword id="KW-0472">Membrane</keyword>
<keyword id="KW-0479">Metal-binding</keyword>
<keyword id="KW-0492">Microsome</keyword>
<keyword id="KW-0503">Monooxygenase</keyword>
<keyword id="KW-0560">Oxidoreductase</keyword>
<keyword id="KW-0597">Phosphoprotein</keyword>
<keyword id="KW-1185">Reference proteome</keyword>
<reference key="1">
    <citation type="journal article" date="1987" name="Biochemistry">
        <title>Gene family of male-specific testosterone 16 alpha-hydroxylase (C-P-450(16) alpha) in mouse liver: cDNA sequences, neonatal imprinting, and reversible regulation by androgen.</title>
        <authorList>
            <person name="Wong G."/>
            <person name="Kawajiri K."/>
            <person name="Negishi M."/>
        </authorList>
    </citation>
    <scope>NUCLEOTIDE SEQUENCE [MRNA]</scope>
</reference>
<reference key="2">
    <citation type="journal article" date="1989" name="Biochemistry">
        <title>Functional characterization of two cytochrome P-450s within the mouse, male-specific steroid 16 alpha-hydroxylase gene family: expression in mammalian cells and chimeric proteins.</title>
        <authorList>
            <person name="Ichikawa T."/>
            <person name="Itakura T."/>
            <person name="Negishi M."/>
        </authorList>
    </citation>
    <scope>NUCLEOTIDE SEQUENCE [MRNA]</scope>
    <source>
        <strain>129/J</strain>
        <tissue>Liver</tissue>
    </source>
</reference>
<reference key="3">
    <citation type="journal article" date="1989" name="J. Biol. Chem.">
        <title>Gene family of male-specific testosterone 16 alpha-hydroxylase (C-P-450(16 alpha)) in mice. Organization, differential regulation, and chromosome localization.</title>
        <authorList>
            <person name="Wong G."/>
            <person name="Itakura T."/>
            <person name="Kawajiri K."/>
            <person name="Skow L."/>
            <person name="Negishi M."/>
        </authorList>
    </citation>
    <scope>NUCLEOTIDE SEQUENCE [GENOMIC DNA]</scope>
</reference>
<reference key="4">
    <citation type="submission" date="2005-09" db="EMBL/GenBank/DDBJ databases">
        <authorList>
            <person name="Mural R.J."/>
            <person name="Adams M.D."/>
            <person name="Myers E.W."/>
            <person name="Smith H.O."/>
            <person name="Venter J.C."/>
        </authorList>
    </citation>
    <scope>NUCLEOTIDE SEQUENCE [LARGE SCALE GENOMIC DNA]</scope>
</reference>
<reference key="5">
    <citation type="journal article" date="2004" name="Genome Res.">
        <title>The status, quality, and expansion of the NIH full-length cDNA project: the Mammalian Gene Collection (MGC).</title>
        <authorList>
            <consortium name="The MGC Project Team"/>
        </authorList>
    </citation>
    <scope>NUCLEOTIDE SEQUENCE [LARGE SCALE MRNA]</scope>
    <source>
        <strain>FVB/N</strain>
        <tissue>Mammary tumor</tissue>
    </source>
</reference>
<reference key="6">
    <citation type="journal article" date="2010" name="Cell">
        <title>A tissue-specific atlas of mouse protein phosphorylation and expression.</title>
        <authorList>
            <person name="Huttlin E.L."/>
            <person name="Jedrychowski M.P."/>
            <person name="Elias J.E."/>
            <person name="Goswami T."/>
            <person name="Rad R."/>
            <person name="Beausoleil S.A."/>
            <person name="Villen J."/>
            <person name="Haas W."/>
            <person name="Sowa M.E."/>
            <person name="Gygi S.P."/>
        </authorList>
    </citation>
    <scope>IDENTIFICATION BY MASS SPECTROMETRY [LARGE SCALE ANALYSIS]</scope>
    <source>
        <tissue>Liver</tissue>
    </source>
</reference>
<protein>
    <recommendedName>
        <fullName>Cytochrome P450 2D9</fullName>
        <ecNumber>1.14.14.1</ecNumber>
    </recommendedName>
    <alternativeName>
        <fullName>CYPIID9</fullName>
    </alternativeName>
    <alternativeName>
        <fullName>Cytochrome P450-16-alpha</fullName>
    </alternativeName>
    <alternativeName>
        <fullName>Cytochrome P450CA</fullName>
    </alternativeName>
    <alternativeName>
        <fullName>Testosterone 16-alpha hydroxylase</fullName>
    </alternativeName>
</protein>